<proteinExistence type="inferred from homology"/>
<evidence type="ECO:0000255" key="1">
    <source>
        <dbReference type="HAMAP-Rule" id="MF_01804"/>
    </source>
</evidence>
<accession>Q98R94</accession>
<feature type="chain" id="PRO_0000211143" description="Segregation and condensation protein B">
    <location>
        <begin position="1"/>
        <end position="207"/>
    </location>
</feature>
<dbReference type="EMBL" id="AL445563">
    <property type="protein sequence ID" value="CAC13289.1"/>
    <property type="molecule type" value="Genomic_DNA"/>
</dbReference>
<dbReference type="PIR" id="D90526">
    <property type="entry name" value="D90526"/>
</dbReference>
<dbReference type="SMR" id="Q98R94"/>
<dbReference type="STRING" id="272635.gene:17576697"/>
<dbReference type="KEGG" id="mpu:MYPU_1160"/>
<dbReference type="eggNOG" id="COG1386">
    <property type="taxonomic scope" value="Bacteria"/>
</dbReference>
<dbReference type="HOGENOM" id="CLU_045647_5_3_14"/>
<dbReference type="Proteomes" id="UP000000528">
    <property type="component" value="Chromosome"/>
</dbReference>
<dbReference type="GO" id="GO:0005737">
    <property type="term" value="C:cytoplasm"/>
    <property type="evidence" value="ECO:0007669"/>
    <property type="project" value="UniProtKB-SubCell"/>
</dbReference>
<dbReference type="GO" id="GO:0051301">
    <property type="term" value="P:cell division"/>
    <property type="evidence" value="ECO:0007669"/>
    <property type="project" value="UniProtKB-KW"/>
</dbReference>
<dbReference type="GO" id="GO:0051304">
    <property type="term" value="P:chromosome separation"/>
    <property type="evidence" value="ECO:0007669"/>
    <property type="project" value="InterPro"/>
</dbReference>
<dbReference type="GO" id="GO:0006260">
    <property type="term" value="P:DNA replication"/>
    <property type="evidence" value="ECO:0007669"/>
    <property type="project" value="UniProtKB-UniRule"/>
</dbReference>
<dbReference type="Gene3D" id="1.10.10.10">
    <property type="entry name" value="Winged helix-like DNA-binding domain superfamily/Winged helix DNA-binding domain"/>
    <property type="match status" value="2"/>
</dbReference>
<dbReference type="HAMAP" id="MF_01804">
    <property type="entry name" value="ScpB"/>
    <property type="match status" value="1"/>
</dbReference>
<dbReference type="InterPro" id="IPR005234">
    <property type="entry name" value="ScpB_csome_segregation"/>
</dbReference>
<dbReference type="InterPro" id="IPR036388">
    <property type="entry name" value="WH-like_DNA-bd_sf"/>
</dbReference>
<dbReference type="InterPro" id="IPR036390">
    <property type="entry name" value="WH_DNA-bd_sf"/>
</dbReference>
<dbReference type="NCBIfam" id="TIGR00281">
    <property type="entry name" value="SMC-Scp complex subunit ScpB"/>
    <property type="match status" value="1"/>
</dbReference>
<dbReference type="PANTHER" id="PTHR34298">
    <property type="entry name" value="SEGREGATION AND CONDENSATION PROTEIN B"/>
    <property type="match status" value="1"/>
</dbReference>
<dbReference type="PANTHER" id="PTHR34298:SF2">
    <property type="entry name" value="SEGREGATION AND CONDENSATION PROTEIN B"/>
    <property type="match status" value="1"/>
</dbReference>
<dbReference type="Pfam" id="PF04079">
    <property type="entry name" value="SMC_ScpB"/>
    <property type="match status" value="1"/>
</dbReference>
<dbReference type="PIRSF" id="PIRSF019345">
    <property type="entry name" value="ScpB"/>
    <property type="match status" value="1"/>
</dbReference>
<dbReference type="SUPFAM" id="SSF46785">
    <property type="entry name" value="Winged helix' DNA-binding domain"/>
    <property type="match status" value="1"/>
</dbReference>
<comment type="function">
    <text evidence="1">Participates in chromosomal partition during cell division. May act via the formation of a condensin-like complex containing Smc and ScpA that pull DNA away from mid-cell into both cell halves.</text>
</comment>
<comment type="subunit">
    <text evidence="1">Homodimer. Homodimerization may be required to stabilize the binding of ScpA to the Smc head domains. Component of a cohesin-like complex composed of ScpA, ScpB and the Smc homodimer, in which ScpA and ScpB bind to the head domain of Smc. The presence of the three proteins is required for the association of the complex with DNA.</text>
</comment>
<comment type="subcellular location">
    <subcellularLocation>
        <location evidence="1">Cytoplasm</location>
    </subcellularLocation>
    <text evidence="1">Associated with two foci at the outer edges of the nucleoid region in young cells, and at four foci within both cell halves in older cells.</text>
</comment>
<comment type="similarity">
    <text evidence="1">Belongs to the ScpB family.</text>
</comment>
<keyword id="KW-0131">Cell cycle</keyword>
<keyword id="KW-0132">Cell division</keyword>
<keyword id="KW-0159">Chromosome partition</keyword>
<keyword id="KW-0963">Cytoplasm</keyword>
<keyword id="KW-1185">Reference proteome</keyword>
<protein>
    <recommendedName>
        <fullName evidence="1">Segregation and condensation protein B</fullName>
    </recommendedName>
</protein>
<sequence length="207" mass="23761">MVQLELKKDQIMKNKIIEALMYFQGDQGLSPEQVKEVFDLEKDQEGKKLLNDFMEFYNAREGGTKVFVFGEIYKIATIEPLKDYVSKLVSIVRYQKLSKAAIEVAGIVAYKQPITKSMINEIRGVASDQVVNTLLVKNLIEEVGISPTPGKPVLYGITNKFYDYFKIKSLQELPNLSEFDFVQSIDEEQEEEQSYEGFNLFSSQREN</sequence>
<organism>
    <name type="scientific">Mycoplasmopsis pulmonis (strain UAB CTIP)</name>
    <name type="common">Mycoplasma pulmonis</name>
    <dbReference type="NCBI Taxonomy" id="272635"/>
    <lineage>
        <taxon>Bacteria</taxon>
        <taxon>Bacillati</taxon>
        <taxon>Mycoplasmatota</taxon>
        <taxon>Mycoplasmoidales</taxon>
        <taxon>Metamycoplasmataceae</taxon>
        <taxon>Mycoplasmopsis</taxon>
    </lineage>
</organism>
<gene>
    <name evidence="1" type="primary">scpB</name>
    <name type="ordered locus">MYPU_1160</name>
</gene>
<name>SCPB_MYCPU</name>
<reference key="1">
    <citation type="journal article" date="2001" name="Nucleic Acids Res.">
        <title>The complete genome sequence of the murine respiratory pathogen Mycoplasma pulmonis.</title>
        <authorList>
            <person name="Chambaud I."/>
            <person name="Heilig R."/>
            <person name="Ferris S."/>
            <person name="Barbe V."/>
            <person name="Samson D."/>
            <person name="Galisson F."/>
            <person name="Moszer I."/>
            <person name="Dybvig K."/>
            <person name="Wroblewski H."/>
            <person name="Viari A."/>
            <person name="Rocha E.P.C."/>
            <person name="Blanchard A."/>
        </authorList>
    </citation>
    <scope>NUCLEOTIDE SEQUENCE [LARGE SCALE GENOMIC DNA]</scope>
    <source>
        <strain>UAB CTIP</strain>
    </source>
</reference>